<evidence type="ECO:0000250" key="1">
    <source>
        <dbReference type="UniProtKB" id="P28737"/>
    </source>
</evidence>
<evidence type="ECO:0000250" key="2">
    <source>
        <dbReference type="UniProtKB" id="Q9D5T0"/>
    </source>
</evidence>
<evidence type="ECO:0000255" key="3"/>
<evidence type="ECO:0000269" key="4">
    <source>
    </source>
</evidence>
<evidence type="ECO:0000269" key="5">
    <source>
    </source>
</evidence>
<evidence type="ECO:0000269" key="6">
    <source>
    </source>
</evidence>
<evidence type="ECO:0000269" key="7">
    <source>
    </source>
</evidence>
<evidence type="ECO:0000269" key="8">
    <source>
    </source>
</evidence>
<evidence type="ECO:0000303" key="9">
    <source>
    </source>
</evidence>
<evidence type="ECO:0000303" key="10">
    <source>
    </source>
</evidence>
<evidence type="ECO:0000303" key="11">
    <source ref="1"/>
</evidence>
<evidence type="ECO:0000305" key="12"/>
<evidence type="ECO:0000305" key="13">
    <source>
    </source>
</evidence>
<evidence type="ECO:0000312" key="14">
    <source>
        <dbReference type="HGNC" id="HGNC:25903"/>
    </source>
</evidence>
<evidence type="ECO:0007829" key="15">
    <source>
        <dbReference type="PDB" id="7UPR"/>
    </source>
</evidence>
<protein>
    <recommendedName>
        <fullName evidence="12">Outer mitochondrial transmembrane helix translocase</fullName>
        <ecNumber evidence="13">7.4.2.-</ecNumber>
    </recommendedName>
    <alternativeName>
        <fullName evidence="12">ATPase family AAA domain-containing protein 1</fullName>
        <shortName evidence="10">hATAD1</shortName>
    </alternativeName>
    <alternativeName>
        <fullName evidence="2">Thorase</fullName>
    </alternativeName>
</protein>
<comment type="function">
    <text evidence="1 2 5">Outer mitochondrial translocase required to remove mislocalized tail-anchored transmembrane proteins on mitochondria (PubMed:24843043). Specifically recognizes and binds tail-anchored transmembrane proteins: acts as a dislocase that mediates the ATP-dependent extraction of mistargeted tail-anchored transmembrane proteins from the mitochondrion outer membrane (By similarity). Also plays a critical role in regulating the surface expression of AMPA receptors (AMPAR), thereby regulating synaptic plasticity and learning and memory (By similarity). Required for NMDA-stimulated AMPAR internalization and inhibition of GRIA1 and GRIA2 recycling back to the plasma membrane; these activities are ATPase-dependent (By similarity).</text>
</comment>
<comment type="catalytic activity">
    <reaction evidence="13">
        <text>[protein]-with a C-terminal TM segment(out) + ATP + H2O = [protein]-with a C-terminal TM segment(in) + ADP + phosphate + H(+)</text>
        <dbReference type="Rhea" id="RHEA:66168"/>
        <dbReference type="Rhea" id="RHEA-COMP:16963"/>
        <dbReference type="ChEBI" id="CHEBI:15377"/>
        <dbReference type="ChEBI" id="CHEBI:15378"/>
        <dbReference type="ChEBI" id="CHEBI:30616"/>
        <dbReference type="ChEBI" id="CHEBI:43474"/>
        <dbReference type="ChEBI" id="CHEBI:90782"/>
        <dbReference type="ChEBI" id="CHEBI:456216"/>
    </reaction>
</comment>
<comment type="subunit">
    <text evidence="2">Interacts with GRIA2 and GRIP1 in an ATP-dependent manner (By similarity). ATAD1-catalyzed ATP hydrolysis disrupts not only its binding to GRIA2 and GRIP1, but also interaction between GRIP1 and GRIA2, leading to AMPAR complex disassembly (By similarity).</text>
</comment>
<comment type="subcellular location">
    <subcellularLocation>
        <location evidence="5">Mitochondrion outer membrane</location>
        <topology evidence="3">Single-pass membrane protein</topology>
    </subcellularLocation>
    <subcellularLocation>
        <location evidence="5">Peroxisome membrane</location>
        <topology evidence="3">Single-pass membrane protein</topology>
    </subcellularLocation>
    <subcellularLocation>
        <location evidence="2">Postsynaptic cell membrane</location>
        <topology evidence="3">Single-pass membrane protein</topology>
    </subcellularLocation>
</comment>
<comment type="alternative products">
    <event type="alternative splicing"/>
    <isoform>
        <id>Q8NBU5-1</id>
        <name>1</name>
        <sequence type="displayed"/>
    </isoform>
    <isoform>
        <id>Q8NBU5-2</id>
        <name>2</name>
        <sequence type="described" ref="VSP_037304"/>
    </isoform>
</comment>
<comment type="disease" evidence="6 7 8">
    <disease id="DI-05272">
        <name>Hyperekplexia 4</name>
        <acronym>HKPX4</acronym>
        <description>An autosomal recessive severe neurologic disorder apparent from birth. HKPX4 is characterized by little if any development, hypertonia, early-onset refractory seizures in some patients, and respiratory failure resulting in early death, mostly in the first months of life.</description>
        <dbReference type="MIM" id="618011"/>
    </disease>
    <text>The disease is caused by variants affecting the gene represented in this entry.</text>
</comment>
<comment type="similarity">
    <text evidence="12">Belongs to the AAA ATPase family. MSP1 subfamily.</text>
</comment>
<gene>
    <name evidence="10 14" type="primary">ATAD1</name>
    <name evidence="11" type="ORF">FNP001</name>
</gene>
<accession>Q8NBU5</accession>
<accession>D3DR26</accession>
<accession>Q6DKG1</accession>
<accession>Q6P4B9</accession>
<accession>Q8N3G1</accession>
<accession>Q8WYR9</accession>
<accession>Q969Y3</accession>
<name>ATAD1_HUMAN</name>
<dbReference type="EC" id="7.4.2.-" evidence="13"/>
<dbReference type="EMBL" id="AF361493">
    <property type="protein sequence ID" value="AAL57218.1"/>
    <property type="molecule type" value="mRNA"/>
</dbReference>
<dbReference type="EMBL" id="AK027506">
    <property type="protein sequence ID" value="BAB55161.1"/>
    <property type="molecule type" value="mRNA"/>
</dbReference>
<dbReference type="EMBL" id="AK075223">
    <property type="protein sequence ID" value="BAC11482.1"/>
    <property type="molecule type" value="mRNA"/>
</dbReference>
<dbReference type="EMBL" id="AC022016">
    <property type="status" value="NOT_ANNOTATED_CDS"/>
    <property type="molecule type" value="Genomic_DNA"/>
</dbReference>
<dbReference type="EMBL" id="AL133327">
    <property type="status" value="NOT_ANNOTATED_CDS"/>
    <property type="molecule type" value="Genomic_DNA"/>
</dbReference>
<dbReference type="EMBL" id="CH471066">
    <property type="protein sequence ID" value="EAW50180.1"/>
    <property type="molecule type" value="Genomic_DNA"/>
</dbReference>
<dbReference type="EMBL" id="CH471066">
    <property type="protein sequence ID" value="EAW50177.1"/>
    <property type="molecule type" value="Genomic_DNA"/>
</dbReference>
<dbReference type="EMBL" id="CH471066">
    <property type="protein sequence ID" value="EAW50179.1"/>
    <property type="molecule type" value="Genomic_DNA"/>
</dbReference>
<dbReference type="EMBL" id="BC010868">
    <property type="protein sequence ID" value="AAH10868.1"/>
    <property type="molecule type" value="mRNA"/>
</dbReference>
<dbReference type="EMBL" id="BC063530">
    <property type="protein sequence ID" value="AAH63530.1"/>
    <property type="molecule type" value="mRNA"/>
</dbReference>
<dbReference type="EMBL" id="BC073998">
    <property type="protein sequence ID" value="AAH73998.1"/>
    <property type="molecule type" value="mRNA"/>
</dbReference>
<dbReference type="EMBL" id="AL834370">
    <property type="protein sequence ID" value="CAD39033.1"/>
    <property type="molecule type" value="mRNA"/>
</dbReference>
<dbReference type="CCDS" id="CCDS7386.1">
    <molecule id="Q8NBU5-1"/>
</dbReference>
<dbReference type="RefSeq" id="NP_001308896.1">
    <molecule id="Q8NBU5-1"/>
    <property type="nucleotide sequence ID" value="NM_001321967.2"/>
</dbReference>
<dbReference type="RefSeq" id="NP_116199.2">
    <molecule id="Q8NBU5-1"/>
    <property type="nucleotide sequence ID" value="NM_032810.3"/>
</dbReference>
<dbReference type="RefSeq" id="XP_005270309.1">
    <molecule id="Q8NBU5-1"/>
    <property type="nucleotide sequence ID" value="XM_005270252.6"/>
</dbReference>
<dbReference type="RefSeq" id="XP_016872336.1">
    <molecule id="Q8NBU5-1"/>
    <property type="nucleotide sequence ID" value="XM_017016847.3"/>
</dbReference>
<dbReference type="RefSeq" id="XP_047281864.1">
    <molecule id="Q8NBU5-1"/>
    <property type="nucleotide sequence ID" value="XM_047425908.1"/>
</dbReference>
<dbReference type="RefSeq" id="XP_054222996.1">
    <molecule id="Q8NBU5-1"/>
    <property type="nucleotide sequence ID" value="XM_054367021.1"/>
</dbReference>
<dbReference type="RefSeq" id="XP_054222997.1">
    <molecule id="Q8NBU5-1"/>
    <property type="nucleotide sequence ID" value="XM_054367022.1"/>
</dbReference>
<dbReference type="PDB" id="7UPR">
    <property type="method" value="EM"/>
    <property type="resolution" value="3.20 A"/>
    <property type="chains" value="A/B/C/D/E/F=42-361"/>
</dbReference>
<dbReference type="PDB" id="7UPT">
    <property type="method" value="EM"/>
    <property type="resolution" value="3.50 A"/>
    <property type="chains" value="A/B/C/D/E/F=42-361"/>
</dbReference>
<dbReference type="PDBsum" id="7UPR"/>
<dbReference type="PDBsum" id="7UPT"/>
<dbReference type="EMDB" id="EMD-26674"/>
<dbReference type="EMDB" id="EMD-26675"/>
<dbReference type="SMR" id="Q8NBU5"/>
<dbReference type="BioGRID" id="124336">
    <property type="interactions" value="95"/>
</dbReference>
<dbReference type="FunCoup" id="Q8NBU5">
    <property type="interactions" value="1778"/>
</dbReference>
<dbReference type="IntAct" id="Q8NBU5">
    <property type="interactions" value="43"/>
</dbReference>
<dbReference type="MINT" id="Q8NBU5"/>
<dbReference type="STRING" id="9606.ENSP00000339017"/>
<dbReference type="GlyGen" id="Q8NBU5">
    <property type="glycosylation" value="2 sites, 1 N-linked glycan (1 site), 1 O-linked glycan (1 site)"/>
</dbReference>
<dbReference type="iPTMnet" id="Q8NBU5"/>
<dbReference type="PhosphoSitePlus" id="Q8NBU5"/>
<dbReference type="SwissPalm" id="Q8NBU5"/>
<dbReference type="BioMuta" id="ATAD1"/>
<dbReference type="DMDM" id="74762551"/>
<dbReference type="jPOST" id="Q8NBU5"/>
<dbReference type="MassIVE" id="Q8NBU5"/>
<dbReference type="PaxDb" id="9606-ENSP00000339017"/>
<dbReference type="PeptideAtlas" id="Q8NBU5"/>
<dbReference type="ProteomicsDB" id="72823">
    <molecule id="Q8NBU5-1"/>
</dbReference>
<dbReference type="ProteomicsDB" id="72824">
    <molecule id="Q8NBU5-2"/>
</dbReference>
<dbReference type="Pumba" id="Q8NBU5"/>
<dbReference type="ABCD" id="Q8NBU5">
    <property type="antibodies" value="1 sequenced antibody"/>
</dbReference>
<dbReference type="Antibodypedia" id="49559">
    <property type="antibodies" value="175 antibodies from 26 providers"/>
</dbReference>
<dbReference type="DNASU" id="84896"/>
<dbReference type="Ensembl" id="ENST00000308448.11">
    <molecule id="Q8NBU5-1"/>
    <property type="protein sequence ID" value="ENSP00000339017.4"/>
    <property type="gene ID" value="ENSG00000138138.14"/>
</dbReference>
<dbReference type="Ensembl" id="ENST00000328142.3">
    <molecule id="Q8NBU5-1"/>
    <property type="protein sequence ID" value="ENSP00000339016.2"/>
    <property type="gene ID" value="ENSG00000138138.14"/>
</dbReference>
<dbReference type="Ensembl" id="ENST00000680024.1">
    <molecule id="Q8NBU5-1"/>
    <property type="protein sequence ID" value="ENSP00000506333.1"/>
    <property type="gene ID" value="ENSG00000138138.14"/>
</dbReference>
<dbReference type="GeneID" id="84896"/>
<dbReference type="KEGG" id="hsa:84896"/>
<dbReference type="MANE-Select" id="ENST00000680024.1">
    <property type="protein sequence ID" value="ENSP00000506333.1"/>
    <property type="RefSeq nucleotide sequence ID" value="NM_001321967.2"/>
    <property type="RefSeq protein sequence ID" value="NP_001308896.1"/>
</dbReference>
<dbReference type="UCSC" id="uc001key.2">
    <molecule id="Q8NBU5-1"/>
    <property type="organism name" value="human"/>
</dbReference>
<dbReference type="AGR" id="HGNC:25903"/>
<dbReference type="CTD" id="84896"/>
<dbReference type="DisGeNET" id="84896"/>
<dbReference type="GeneCards" id="ATAD1"/>
<dbReference type="HGNC" id="HGNC:25903">
    <property type="gene designation" value="ATAD1"/>
</dbReference>
<dbReference type="HPA" id="ENSG00000138138">
    <property type="expression patterns" value="Low tissue specificity"/>
</dbReference>
<dbReference type="MalaCards" id="ATAD1"/>
<dbReference type="MIM" id="614452">
    <property type="type" value="gene"/>
</dbReference>
<dbReference type="MIM" id="618011">
    <property type="type" value="phenotype"/>
</dbReference>
<dbReference type="neXtProt" id="NX_Q8NBU5"/>
<dbReference type="OpenTargets" id="ENSG00000138138"/>
<dbReference type="Orphanet" id="3197">
    <property type="disease" value="Hereditary hyperekplexia"/>
</dbReference>
<dbReference type="PharmGKB" id="PA134914940"/>
<dbReference type="VEuPathDB" id="HostDB:ENSG00000138138"/>
<dbReference type="eggNOG" id="KOG0737">
    <property type="taxonomic scope" value="Eukaryota"/>
</dbReference>
<dbReference type="GeneTree" id="ENSGT00550000074823"/>
<dbReference type="HOGENOM" id="CLU_000688_21_14_1"/>
<dbReference type="InParanoid" id="Q8NBU5"/>
<dbReference type="OMA" id="CRNAAMR"/>
<dbReference type="OrthoDB" id="10254455at2759"/>
<dbReference type="PAN-GO" id="Q8NBU5">
    <property type="GO annotations" value="2 GO annotations based on evolutionary models"/>
</dbReference>
<dbReference type="PhylomeDB" id="Q8NBU5"/>
<dbReference type="TreeFam" id="TF105016"/>
<dbReference type="PathwayCommons" id="Q8NBU5"/>
<dbReference type="Reactome" id="R-HSA-9603798">
    <property type="pathway name" value="Class I peroxisomal membrane protein import"/>
</dbReference>
<dbReference type="SignaLink" id="Q8NBU5"/>
<dbReference type="BioGRID-ORCS" id="84896">
    <property type="hits" value="46 hits in 1154 CRISPR screens"/>
</dbReference>
<dbReference type="CD-CODE" id="FB4E32DD">
    <property type="entry name" value="Presynaptic clusters and postsynaptic densities"/>
</dbReference>
<dbReference type="ChiTaRS" id="ATAD1">
    <property type="organism name" value="human"/>
</dbReference>
<dbReference type="GenomeRNAi" id="84896"/>
<dbReference type="Pharos" id="Q8NBU5">
    <property type="development level" value="Tbio"/>
</dbReference>
<dbReference type="PRO" id="PR:Q8NBU5"/>
<dbReference type="Proteomes" id="UP000005640">
    <property type="component" value="Chromosome 10"/>
</dbReference>
<dbReference type="RNAct" id="Q8NBU5">
    <property type="molecule type" value="protein"/>
</dbReference>
<dbReference type="Bgee" id="ENSG00000138138">
    <property type="expression patterns" value="Expressed in right testis and 181 other cell types or tissues"/>
</dbReference>
<dbReference type="GO" id="GO:0005829">
    <property type="term" value="C:cytosol"/>
    <property type="evidence" value="ECO:0000304"/>
    <property type="project" value="Reactome"/>
</dbReference>
<dbReference type="GO" id="GO:0098978">
    <property type="term" value="C:glutamatergic synapse"/>
    <property type="evidence" value="ECO:0007669"/>
    <property type="project" value="Ensembl"/>
</dbReference>
<dbReference type="GO" id="GO:0016020">
    <property type="term" value="C:membrane"/>
    <property type="evidence" value="ECO:0007005"/>
    <property type="project" value="UniProtKB"/>
</dbReference>
<dbReference type="GO" id="GO:0005741">
    <property type="term" value="C:mitochondrial outer membrane"/>
    <property type="evidence" value="ECO:0000314"/>
    <property type="project" value="UniProtKB"/>
</dbReference>
<dbReference type="GO" id="GO:0005739">
    <property type="term" value="C:mitochondrion"/>
    <property type="evidence" value="ECO:0006056"/>
    <property type="project" value="FlyBase"/>
</dbReference>
<dbReference type="GO" id="GO:0005778">
    <property type="term" value="C:peroxisomal membrane"/>
    <property type="evidence" value="ECO:0000314"/>
    <property type="project" value="UniProtKB"/>
</dbReference>
<dbReference type="GO" id="GO:0045211">
    <property type="term" value="C:postsynaptic membrane"/>
    <property type="evidence" value="ECO:0000250"/>
    <property type="project" value="UniProtKB"/>
</dbReference>
<dbReference type="GO" id="GO:0005524">
    <property type="term" value="F:ATP binding"/>
    <property type="evidence" value="ECO:0007669"/>
    <property type="project" value="UniProtKB-KW"/>
</dbReference>
<dbReference type="GO" id="GO:0016887">
    <property type="term" value="F:ATP hydrolysis activity"/>
    <property type="evidence" value="ECO:0000250"/>
    <property type="project" value="UniProtKB"/>
</dbReference>
<dbReference type="GO" id="GO:0140567">
    <property type="term" value="F:membrane protein dislocase activity"/>
    <property type="evidence" value="ECO:0007669"/>
    <property type="project" value="RHEA"/>
</dbReference>
<dbReference type="GO" id="GO:0140570">
    <property type="term" value="P:extraction of mislocalized protein from mitochondrial outer membrane"/>
    <property type="evidence" value="ECO:0000314"/>
    <property type="project" value="UniProtKB"/>
</dbReference>
<dbReference type="GO" id="GO:0007612">
    <property type="term" value="P:learning"/>
    <property type="evidence" value="ECO:0000250"/>
    <property type="project" value="UniProtKB"/>
</dbReference>
<dbReference type="GO" id="GO:0007613">
    <property type="term" value="P:memory"/>
    <property type="evidence" value="ECO:0000250"/>
    <property type="project" value="UniProtKB"/>
</dbReference>
<dbReference type="GO" id="GO:0051967">
    <property type="term" value="P:negative regulation of synaptic transmission, glutamatergic"/>
    <property type="evidence" value="ECO:0000250"/>
    <property type="project" value="UniProtKB"/>
</dbReference>
<dbReference type="GO" id="GO:0002092">
    <property type="term" value="P:positive regulation of receptor internalization"/>
    <property type="evidence" value="ECO:0000250"/>
    <property type="project" value="UniProtKB"/>
</dbReference>
<dbReference type="GO" id="GO:0099149">
    <property type="term" value="P:regulation of postsynaptic neurotransmitter receptor internalization"/>
    <property type="evidence" value="ECO:0007669"/>
    <property type="project" value="Ensembl"/>
</dbReference>
<dbReference type="CDD" id="cd19520">
    <property type="entry name" value="RecA-like_ATAD1"/>
    <property type="match status" value="1"/>
</dbReference>
<dbReference type="FunFam" id="1.10.8.60:FF:000044">
    <property type="entry name" value="ATPase family AAA domain-containing protein 1"/>
    <property type="match status" value="1"/>
</dbReference>
<dbReference type="FunFam" id="3.40.50.300:FF:000538">
    <property type="entry name" value="ATPase family AAA domain-containing protein 1"/>
    <property type="match status" value="1"/>
</dbReference>
<dbReference type="Gene3D" id="1.10.8.60">
    <property type="match status" value="1"/>
</dbReference>
<dbReference type="Gene3D" id="3.40.50.300">
    <property type="entry name" value="P-loop containing nucleotide triphosphate hydrolases"/>
    <property type="match status" value="1"/>
</dbReference>
<dbReference type="InterPro" id="IPR003593">
    <property type="entry name" value="AAA+_ATPase"/>
</dbReference>
<dbReference type="InterPro" id="IPR041569">
    <property type="entry name" value="AAA_lid_3"/>
</dbReference>
<dbReference type="InterPro" id="IPR003959">
    <property type="entry name" value="ATPase_AAA_core"/>
</dbReference>
<dbReference type="InterPro" id="IPR003960">
    <property type="entry name" value="ATPase_AAA_CS"/>
</dbReference>
<dbReference type="InterPro" id="IPR051701">
    <property type="entry name" value="Mito_OM_Translocase_MSP1"/>
</dbReference>
<dbReference type="InterPro" id="IPR027417">
    <property type="entry name" value="P-loop_NTPase"/>
</dbReference>
<dbReference type="PANTHER" id="PTHR45644">
    <property type="entry name" value="AAA ATPASE, PUTATIVE (AFU_ORTHOLOGUE AFUA_2G12920)-RELATED-RELATED"/>
    <property type="match status" value="1"/>
</dbReference>
<dbReference type="PANTHER" id="PTHR45644:SF2">
    <property type="entry name" value="OUTER MITOCHONDRIAL TRANSMEMBRANE HELIX TRANSLOCASE"/>
    <property type="match status" value="1"/>
</dbReference>
<dbReference type="Pfam" id="PF00004">
    <property type="entry name" value="AAA"/>
    <property type="match status" value="1"/>
</dbReference>
<dbReference type="Pfam" id="PF17862">
    <property type="entry name" value="AAA_lid_3"/>
    <property type="match status" value="1"/>
</dbReference>
<dbReference type="SMART" id="SM00382">
    <property type="entry name" value="AAA"/>
    <property type="match status" value="1"/>
</dbReference>
<dbReference type="SUPFAM" id="SSF52540">
    <property type="entry name" value="P-loop containing nucleoside triphosphate hydrolases"/>
    <property type="match status" value="1"/>
</dbReference>
<dbReference type="PROSITE" id="PS00674">
    <property type="entry name" value="AAA"/>
    <property type="match status" value="1"/>
</dbReference>
<organism>
    <name type="scientific">Homo sapiens</name>
    <name type="common">Human</name>
    <dbReference type="NCBI Taxonomy" id="9606"/>
    <lineage>
        <taxon>Eukaryota</taxon>
        <taxon>Metazoa</taxon>
        <taxon>Chordata</taxon>
        <taxon>Craniata</taxon>
        <taxon>Vertebrata</taxon>
        <taxon>Euteleostomi</taxon>
        <taxon>Mammalia</taxon>
        <taxon>Eutheria</taxon>
        <taxon>Euarchontoglires</taxon>
        <taxon>Primates</taxon>
        <taxon>Haplorrhini</taxon>
        <taxon>Catarrhini</taxon>
        <taxon>Hominidae</taxon>
        <taxon>Homo</taxon>
    </lineage>
</organism>
<reference key="1">
    <citation type="submission" date="2001-03" db="EMBL/GenBank/DDBJ databases">
        <title>A novel gene expressed in fetal normal pituitary.</title>
        <authorList>
            <person name="Liu F."/>
            <person name="Xu X.R."/>
            <person name="Qian B.Z."/>
            <person name="Xiao H."/>
            <person name="Chen Z."/>
            <person name="Han Z."/>
        </authorList>
    </citation>
    <scope>NUCLEOTIDE SEQUENCE [MRNA] (ISOFORM 1)</scope>
    <source>
        <tissue>Pituitary</tissue>
    </source>
</reference>
<reference key="2">
    <citation type="journal article" date="2004" name="Nat. Genet.">
        <title>Complete sequencing and characterization of 21,243 full-length human cDNAs.</title>
        <authorList>
            <person name="Ota T."/>
            <person name="Suzuki Y."/>
            <person name="Nishikawa T."/>
            <person name="Otsuki T."/>
            <person name="Sugiyama T."/>
            <person name="Irie R."/>
            <person name="Wakamatsu A."/>
            <person name="Hayashi K."/>
            <person name="Sato H."/>
            <person name="Nagai K."/>
            <person name="Kimura K."/>
            <person name="Makita H."/>
            <person name="Sekine M."/>
            <person name="Obayashi M."/>
            <person name="Nishi T."/>
            <person name="Shibahara T."/>
            <person name="Tanaka T."/>
            <person name="Ishii S."/>
            <person name="Yamamoto J."/>
            <person name="Saito K."/>
            <person name="Kawai Y."/>
            <person name="Isono Y."/>
            <person name="Nakamura Y."/>
            <person name="Nagahari K."/>
            <person name="Murakami K."/>
            <person name="Yasuda T."/>
            <person name="Iwayanagi T."/>
            <person name="Wagatsuma M."/>
            <person name="Shiratori A."/>
            <person name="Sudo H."/>
            <person name="Hosoiri T."/>
            <person name="Kaku Y."/>
            <person name="Kodaira H."/>
            <person name="Kondo H."/>
            <person name="Sugawara M."/>
            <person name="Takahashi M."/>
            <person name="Kanda K."/>
            <person name="Yokoi T."/>
            <person name="Furuya T."/>
            <person name="Kikkawa E."/>
            <person name="Omura Y."/>
            <person name="Abe K."/>
            <person name="Kamihara K."/>
            <person name="Katsuta N."/>
            <person name="Sato K."/>
            <person name="Tanikawa M."/>
            <person name="Yamazaki M."/>
            <person name="Ninomiya K."/>
            <person name="Ishibashi T."/>
            <person name="Yamashita H."/>
            <person name="Murakawa K."/>
            <person name="Fujimori K."/>
            <person name="Tanai H."/>
            <person name="Kimata M."/>
            <person name="Watanabe M."/>
            <person name="Hiraoka S."/>
            <person name="Chiba Y."/>
            <person name="Ishida S."/>
            <person name="Ono Y."/>
            <person name="Takiguchi S."/>
            <person name="Watanabe S."/>
            <person name="Yosida M."/>
            <person name="Hotuta T."/>
            <person name="Kusano J."/>
            <person name="Kanehori K."/>
            <person name="Takahashi-Fujii A."/>
            <person name="Hara H."/>
            <person name="Tanase T.-O."/>
            <person name="Nomura Y."/>
            <person name="Togiya S."/>
            <person name="Komai F."/>
            <person name="Hara R."/>
            <person name="Takeuchi K."/>
            <person name="Arita M."/>
            <person name="Imose N."/>
            <person name="Musashino K."/>
            <person name="Yuuki H."/>
            <person name="Oshima A."/>
            <person name="Sasaki N."/>
            <person name="Aotsuka S."/>
            <person name="Yoshikawa Y."/>
            <person name="Matsunawa H."/>
            <person name="Ichihara T."/>
            <person name="Shiohata N."/>
            <person name="Sano S."/>
            <person name="Moriya S."/>
            <person name="Momiyama H."/>
            <person name="Satoh N."/>
            <person name="Takami S."/>
            <person name="Terashima Y."/>
            <person name="Suzuki O."/>
            <person name="Nakagawa S."/>
            <person name="Senoh A."/>
            <person name="Mizoguchi H."/>
            <person name="Goto Y."/>
            <person name="Shimizu F."/>
            <person name="Wakebe H."/>
            <person name="Hishigaki H."/>
            <person name="Watanabe T."/>
            <person name="Sugiyama A."/>
            <person name="Takemoto M."/>
            <person name="Kawakami B."/>
            <person name="Yamazaki M."/>
            <person name="Watanabe K."/>
            <person name="Kumagai A."/>
            <person name="Itakura S."/>
            <person name="Fukuzumi Y."/>
            <person name="Fujimori Y."/>
            <person name="Komiyama M."/>
            <person name="Tashiro H."/>
            <person name="Tanigami A."/>
            <person name="Fujiwara T."/>
            <person name="Ono T."/>
            <person name="Yamada K."/>
            <person name="Fujii Y."/>
            <person name="Ozaki K."/>
            <person name="Hirao M."/>
            <person name="Ohmori Y."/>
            <person name="Kawabata A."/>
            <person name="Hikiji T."/>
            <person name="Kobatake N."/>
            <person name="Inagaki H."/>
            <person name="Ikema Y."/>
            <person name="Okamoto S."/>
            <person name="Okitani R."/>
            <person name="Kawakami T."/>
            <person name="Noguchi S."/>
            <person name="Itoh T."/>
            <person name="Shigeta K."/>
            <person name="Senba T."/>
            <person name="Matsumura K."/>
            <person name="Nakajima Y."/>
            <person name="Mizuno T."/>
            <person name="Morinaga M."/>
            <person name="Sasaki M."/>
            <person name="Togashi T."/>
            <person name="Oyama M."/>
            <person name="Hata H."/>
            <person name="Watanabe M."/>
            <person name="Komatsu T."/>
            <person name="Mizushima-Sugano J."/>
            <person name="Satoh T."/>
            <person name="Shirai Y."/>
            <person name="Takahashi Y."/>
            <person name="Nakagawa K."/>
            <person name="Okumura K."/>
            <person name="Nagase T."/>
            <person name="Nomura N."/>
            <person name="Kikuchi H."/>
            <person name="Masuho Y."/>
            <person name="Yamashita R."/>
            <person name="Nakai K."/>
            <person name="Yada T."/>
            <person name="Nakamura Y."/>
            <person name="Ohara O."/>
            <person name="Isogai T."/>
            <person name="Sugano S."/>
        </authorList>
    </citation>
    <scope>NUCLEOTIDE SEQUENCE [LARGE SCALE MRNA] (ISOFORM 1)</scope>
    <source>
        <tissue>Placenta</tissue>
    </source>
</reference>
<reference key="3">
    <citation type="journal article" date="2004" name="Nature">
        <title>The DNA sequence and comparative analysis of human chromosome 10.</title>
        <authorList>
            <person name="Deloukas P."/>
            <person name="Earthrowl M.E."/>
            <person name="Grafham D.V."/>
            <person name="Rubenfield M."/>
            <person name="French L."/>
            <person name="Steward C.A."/>
            <person name="Sims S.K."/>
            <person name="Jones M.C."/>
            <person name="Searle S."/>
            <person name="Scott C."/>
            <person name="Howe K."/>
            <person name="Hunt S.E."/>
            <person name="Andrews T.D."/>
            <person name="Gilbert J.G.R."/>
            <person name="Swarbreck D."/>
            <person name="Ashurst J.L."/>
            <person name="Taylor A."/>
            <person name="Battles J."/>
            <person name="Bird C.P."/>
            <person name="Ainscough R."/>
            <person name="Almeida J.P."/>
            <person name="Ashwell R.I.S."/>
            <person name="Ambrose K.D."/>
            <person name="Babbage A.K."/>
            <person name="Bagguley C.L."/>
            <person name="Bailey J."/>
            <person name="Banerjee R."/>
            <person name="Bates K."/>
            <person name="Beasley H."/>
            <person name="Bray-Allen S."/>
            <person name="Brown A.J."/>
            <person name="Brown J.Y."/>
            <person name="Burford D.C."/>
            <person name="Burrill W."/>
            <person name="Burton J."/>
            <person name="Cahill P."/>
            <person name="Camire D."/>
            <person name="Carter N.P."/>
            <person name="Chapman J.C."/>
            <person name="Clark S.Y."/>
            <person name="Clarke G."/>
            <person name="Clee C.M."/>
            <person name="Clegg S."/>
            <person name="Corby N."/>
            <person name="Coulson A."/>
            <person name="Dhami P."/>
            <person name="Dutta I."/>
            <person name="Dunn M."/>
            <person name="Faulkner L."/>
            <person name="Frankish A."/>
            <person name="Frankland J.A."/>
            <person name="Garner P."/>
            <person name="Garnett J."/>
            <person name="Gribble S."/>
            <person name="Griffiths C."/>
            <person name="Grocock R."/>
            <person name="Gustafson E."/>
            <person name="Hammond S."/>
            <person name="Harley J.L."/>
            <person name="Hart E."/>
            <person name="Heath P.D."/>
            <person name="Ho T.P."/>
            <person name="Hopkins B."/>
            <person name="Horne J."/>
            <person name="Howden P.J."/>
            <person name="Huckle E."/>
            <person name="Hynds C."/>
            <person name="Johnson C."/>
            <person name="Johnson D."/>
            <person name="Kana A."/>
            <person name="Kay M."/>
            <person name="Kimberley A.M."/>
            <person name="Kershaw J.K."/>
            <person name="Kokkinaki M."/>
            <person name="Laird G.K."/>
            <person name="Lawlor S."/>
            <person name="Lee H.M."/>
            <person name="Leongamornlert D.A."/>
            <person name="Laird G."/>
            <person name="Lloyd C."/>
            <person name="Lloyd D.M."/>
            <person name="Loveland J."/>
            <person name="Lovell J."/>
            <person name="McLaren S."/>
            <person name="McLay K.E."/>
            <person name="McMurray A."/>
            <person name="Mashreghi-Mohammadi M."/>
            <person name="Matthews L."/>
            <person name="Milne S."/>
            <person name="Nickerson T."/>
            <person name="Nguyen M."/>
            <person name="Overton-Larty E."/>
            <person name="Palmer S.A."/>
            <person name="Pearce A.V."/>
            <person name="Peck A.I."/>
            <person name="Pelan S."/>
            <person name="Phillimore B."/>
            <person name="Porter K."/>
            <person name="Rice C.M."/>
            <person name="Rogosin A."/>
            <person name="Ross M.T."/>
            <person name="Sarafidou T."/>
            <person name="Sehra H.K."/>
            <person name="Shownkeen R."/>
            <person name="Skuce C.D."/>
            <person name="Smith M."/>
            <person name="Standring L."/>
            <person name="Sycamore N."/>
            <person name="Tester J."/>
            <person name="Thorpe A."/>
            <person name="Torcasso W."/>
            <person name="Tracey A."/>
            <person name="Tromans A."/>
            <person name="Tsolas J."/>
            <person name="Wall M."/>
            <person name="Walsh J."/>
            <person name="Wang H."/>
            <person name="Weinstock K."/>
            <person name="West A.P."/>
            <person name="Willey D.L."/>
            <person name="Whitehead S.L."/>
            <person name="Wilming L."/>
            <person name="Wray P.W."/>
            <person name="Young L."/>
            <person name="Chen Y."/>
            <person name="Lovering R.C."/>
            <person name="Moschonas N.K."/>
            <person name="Siebert R."/>
            <person name="Fechtel K."/>
            <person name="Bentley D."/>
            <person name="Durbin R.M."/>
            <person name="Hubbard T."/>
            <person name="Doucette-Stamm L."/>
            <person name="Beck S."/>
            <person name="Smith D.R."/>
            <person name="Rogers J."/>
        </authorList>
    </citation>
    <scope>NUCLEOTIDE SEQUENCE [LARGE SCALE GENOMIC DNA]</scope>
</reference>
<reference key="4">
    <citation type="submission" date="2005-09" db="EMBL/GenBank/DDBJ databases">
        <authorList>
            <person name="Mural R.J."/>
            <person name="Istrail S."/>
            <person name="Sutton G.G."/>
            <person name="Florea L."/>
            <person name="Halpern A.L."/>
            <person name="Mobarry C.M."/>
            <person name="Lippert R."/>
            <person name="Walenz B."/>
            <person name="Shatkay H."/>
            <person name="Dew I."/>
            <person name="Miller J.R."/>
            <person name="Flanigan M.J."/>
            <person name="Edwards N.J."/>
            <person name="Bolanos R."/>
            <person name="Fasulo D."/>
            <person name="Halldorsson B.V."/>
            <person name="Hannenhalli S."/>
            <person name="Turner R."/>
            <person name="Yooseph S."/>
            <person name="Lu F."/>
            <person name="Nusskern D.R."/>
            <person name="Shue B.C."/>
            <person name="Zheng X.H."/>
            <person name="Zhong F."/>
            <person name="Delcher A.L."/>
            <person name="Huson D.H."/>
            <person name="Kravitz S.A."/>
            <person name="Mouchard L."/>
            <person name="Reinert K."/>
            <person name="Remington K.A."/>
            <person name="Clark A.G."/>
            <person name="Waterman M.S."/>
            <person name="Eichler E.E."/>
            <person name="Adams M.D."/>
            <person name="Hunkapiller M.W."/>
            <person name="Myers E.W."/>
            <person name="Venter J.C."/>
        </authorList>
    </citation>
    <scope>NUCLEOTIDE SEQUENCE [LARGE SCALE GENOMIC DNA]</scope>
</reference>
<reference key="5">
    <citation type="journal article" date="2004" name="Genome Res.">
        <title>The status, quality, and expansion of the NIH full-length cDNA project: the Mammalian Gene Collection (MGC).</title>
        <authorList>
            <consortium name="The MGC Project Team"/>
        </authorList>
    </citation>
    <scope>NUCLEOTIDE SEQUENCE [LARGE SCALE MRNA] (ISOFORM 2)</scope>
    <scope>NUCLEOTIDE SEQUENCE [LARGE SCALE MRNA] OF 32-361 (ISOFORM 1)</scope>
    <source>
        <tissue>Bone</tissue>
        <tissue>Lung</tissue>
        <tissue>PNS</tissue>
    </source>
</reference>
<reference key="6">
    <citation type="journal article" date="2007" name="BMC Genomics">
        <title>The full-ORF clone resource of the German cDNA consortium.</title>
        <authorList>
            <person name="Bechtel S."/>
            <person name="Rosenfelder H."/>
            <person name="Duda A."/>
            <person name="Schmidt C.P."/>
            <person name="Ernst U."/>
            <person name="Wellenreuther R."/>
            <person name="Mehrle A."/>
            <person name="Schuster C."/>
            <person name="Bahr A."/>
            <person name="Bloecker H."/>
            <person name="Heubner D."/>
            <person name="Hoerlein A."/>
            <person name="Michel G."/>
            <person name="Wedler H."/>
            <person name="Koehrer K."/>
            <person name="Ottenwaelder B."/>
            <person name="Poustka A."/>
            <person name="Wiemann S."/>
            <person name="Schupp I."/>
        </authorList>
    </citation>
    <scope>NUCLEOTIDE SEQUENCE [LARGE SCALE MRNA] OF 47-361 (ISOFORM 1)</scope>
    <source>
        <tissue>Melanoma</tissue>
    </source>
</reference>
<reference key="7">
    <citation type="journal article" date="2006" name="Cell">
        <title>Global, in vivo, and site-specific phosphorylation dynamics in signaling networks.</title>
        <authorList>
            <person name="Olsen J.V."/>
            <person name="Blagoev B."/>
            <person name="Gnad F."/>
            <person name="Macek B."/>
            <person name="Kumar C."/>
            <person name="Mortensen P."/>
            <person name="Mann M."/>
        </authorList>
    </citation>
    <scope>IDENTIFICATION BY MASS SPECTROMETRY [LARGE SCALE ANALYSIS]</scope>
    <source>
        <tissue>Cervix carcinoma</tissue>
    </source>
</reference>
<reference key="8">
    <citation type="journal article" date="2008" name="Proc. Natl. Acad. Sci. U.S.A.">
        <title>A quantitative atlas of mitotic phosphorylation.</title>
        <authorList>
            <person name="Dephoure N."/>
            <person name="Zhou C."/>
            <person name="Villen J."/>
            <person name="Beausoleil S.A."/>
            <person name="Bakalarski C.E."/>
            <person name="Elledge S.J."/>
            <person name="Gygi S.P."/>
        </authorList>
    </citation>
    <scope>IDENTIFICATION BY MASS SPECTROMETRY [LARGE SCALE ANALYSIS]</scope>
    <source>
        <tissue>Cervix carcinoma</tissue>
    </source>
</reference>
<reference key="9">
    <citation type="journal article" date="2011" name="BMC Syst. Biol.">
        <title>Initial characterization of the human central proteome.</title>
        <authorList>
            <person name="Burkard T.R."/>
            <person name="Planyavsky M."/>
            <person name="Kaupe I."/>
            <person name="Breitwieser F.P."/>
            <person name="Buerckstuemmer T."/>
            <person name="Bennett K.L."/>
            <person name="Superti-Furga G."/>
            <person name="Colinge J."/>
        </authorList>
    </citation>
    <scope>IDENTIFICATION BY MASS SPECTROMETRY [LARGE SCALE ANALYSIS]</scope>
</reference>
<reference key="10">
    <citation type="journal article" date="2013" name="J. Proteome Res.">
        <title>Toward a comprehensive characterization of a human cancer cell phosphoproteome.</title>
        <authorList>
            <person name="Zhou H."/>
            <person name="Di Palma S."/>
            <person name="Preisinger C."/>
            <person name="Peng M."/>
            <person name="Polat A.N."/>
            <person name="Heck A.J."/>
            <person name="Mohammed S."/>
        </authorList>
    </citation>
    <scope>IDENTIFICATION BY MASS SPECTROMETRY [LARGE SCALE ANALYSIS]</scope>
    <source>
        <tissue>Cervix carcinoma</tissue>
        <tissue>Erythroleukemia</tissue>
    </source>
</reference>
<reference key="11">
    <citation type="journal article" date="2014" name="EMBO J.">
        <title>Msp1/ATAD1 maintains mitochondrial function by facilitating the degradation of mislocalized tail-anchored proteins.</title>
        <authorList>
            <person name="Chen Y.C."/>
            <person name="Umanah G.K."/>
            <person name="Dephoure N."/>
            <person name="Andrabi S.A."/>
            <person name="Gygi S.P."/>
            <person name="Dawson T.M."/>
            <person name="Dawson V.L."/>
            <person name="Rutter J."/>
        </authorList>
    </citation>
    <scope>FUNCTION</scope>
    <scope>SUBCELLULAR LOCATION</scope>
</reference>
<reference key="12">
    <citation type="journal article" date="2014" name="J. Proteomics">
        <title>An enzyme assisted RP-RPLC approach for in-depth analysis of human liver phosphoproteome.</title>
        <authorList>
            <person name="Bian Y."/>
            <person name="Song C."/>
            <person name="Cheng K."/>
            <person name="Dong M."/>
            <person name="Wang F."/>
            <person name="Huang J."/>
            <person name="Sun D."/>
            <person name="Wang L."/>
            <person name="Ye M."/>
            <person name="Zou H."/>
        </authorList>
    </citation>
    <scope>IDENTIFICATION BY MASS SPECTROMETRY [LARGE SCALE ANALYSIS]</scope>
    <source>
        <tissue>Liver</tissue>
    </source>
</reference>
<reference key="13">
    <citation type="journal article" date="2015" name="Proteomics">
        <title>N-terminome analysis of the human mitochondrial proteome.</title>
        <authorList>
            <person name="Vaca Jacome A.S."/>
            <person name="Rabilloud T."/>
            <person name="Schaeffer-Reiss C."/>
            <person name="Rompais M."/>
            <person name="Ayoub D."/>
            <person name="Lane L."/>
            <person name="Bairoch A."/>
            <person name="Van Dorsselaer A."/>
            <person name="Carapito C."/>
        </authorList>
    </citation>
    <scope>IDENTIFICATION BY MASS SPECTROMETRY [LARGE SCALE ANALYSIS]</scope>
</reference>
<reference key="14">
    <citation type="journal article" date="2017" name="Neurol. Genet.">
        <title>Precision therapy for a new disorder of AMPA receptor recycling due to mutations in ATAD1.</title>
        <authorList>
            <person name="Ahrens-Nicklas R.C."/>
            <person name="Umanah G.K."/>
            <person name="Sondheimer N."/>
            <person name="Deardorff M.A."/>
            <person name="Wilkens A.B."/>
            <person name="Conlin L.K."/>
            <person name="Santani A.B."/>
            <person name="Nesbitt A."/>
            <person name="Juulsola J."/>
            <person name="Ma E."/>
            <person name="Dawson T.M."/>
            <person name="Dawson V.L."/>
            <person name="Marsh E.D."/>
        </authorList>
    </citation>
    <scope>INVOLVEMENT IN HKPX4</scope>
    <scope>VARIANT HKPX4 276-GLU--ASP-361 DEL</scope>
    <scope>CHARACTERIZATION OF VARIANT HKPX4 276-GLU--ASP-361 DEL</scope>
</reference>
<reference key="15">
    <citation type="journal article" date="2018" name="Brain">
        <title>ATAD1 encephalopathy and stiff baby syndrome: a recognizable clinical presentation.</title>
        <authorList>
            <person name="Wolf N.I."/>
            <person name="Zschocke J."/>
            <person name="Jakobs C."/>
            <person name="Rating D."/>
            <person name="Hoffmann G.F."/>
        </authorList>
    </citation>
    <scope>INVOLVEMENT IN HKPX4</scope>
    <scope>VARIANT HKPX4 HIS-54</scope>
</reference>
<reference key="16">
    <citation type="journal article" date="2018" name="Brain">
        <title>A homozygous ATAD1 mutation impairs postsynaptic AMPA receptor trafficking and causes a lethal encephalopathy.</title>
        <authorList>
            <person name="Piard J."/>
            <person name="Umanah G.K.E."/>
            <person name="Harms F.L."/>
            <person name="Abalde-Atristain L."/>
            <person name="Amram D."/>
            <person name="Chang M."/>
            <person name="Chen R."/>
            <person name="Alawi M."/>
            <person name="Salpietro V."/>
            <person name="Rees M.I."/>
            <person name="Chung S.K."/>
            <person name="Houlden H."/>
            <person name="Verloes A."/>
            <person name="Dawson T.M."/>
            <person name="Dawson V.L."/>
            <person name="Van Maldergem L."/>
            <person name="Kutsche K."/>
        </authorList>
    </citation>
    <scope>INVOLVEMENT IN HKPX4</scope>
</reference>
<reference key="17">
    <citation type="journal article" date="2006" name="Science">
        <title>The consensus coding sequences of human breast and colorectal cancers.</title>
        <authorList>
            <person name="Sjoeblom T."/>
            <person name="Jones S."/>
            <person name="Wood L.D."/>
            <person name="Parsons D.W."/>
            <person name="Lin J."/>
            <person name="Barber T.D."/>
            <person name="Mandelker D."/>
            <person name="Leary R.J."/>
            <person name="Ptak J."/>
            <person name="Silliman N."/>
            <person name="Szabo S."/>
            <person name="Buckhaults P."/>
            <person name="Farrell C."/>
            <person name="Meeh P."/>
            <person name="Markowitz S.D."/>
            <person name="Willis J."/>
            <person name="Dawson D."/>
            <person name="Willson J.K.V."/>
            <person name="Gazdar A.F."/>
            <person name="Hartigan J."/>
            <person name="Wu L."/>
            <person name="Liu C."/>
            <person name="Parmigiani G."/>
            <person name="Park B.H."/>
            <person name="Bachman K.E."/>
            <person name="Papadopoulos N."/>
            <person name="Vogelstein B."/>
            <person name="Kinzler K.W."/>
            <person name="Velculescu V.E."/>
        </authorList>
    </citation>
    <scope>VARIANT [LARGE SCALE ANALYSIS] ILE-107</scope>
</reference>
<sequence>MVHAEAFSRPLSRNEVVGLIFRLTIFGAVTYFTIKWMVDAIDPTRKQKVEAQKQAEKLMKQIGVKNVKLSEYEMSIAAHLVDPLNMHVTWSDIAGLDDVITDLKDTVILPIKKKHLFENSRLLQPPKGVLLYGPPGCGKTLIAKATAKEAGCRFINLQPSTLTDKWYGESQKLAAAVFSLAIKLQPSIIFIDEIDSFLRNRSSSDHEATAMMKAQFMSLWDGLDTDHSCQVIVMGATNRPQDLDSAIMRRMPTRFHINQPALKQREAILKLILKNENVDRHVDLLEVAQETDGFSGSDLKEMCRDAALLCVREYVNSTSEESHDEDEIRPVQQQDLHRAIEKMKKSKDAAFQNVLTHVCLD</sequence>
<keyword id="KW-0002">3D-structure</keyword>
<keyword id="KW-0025">Alternative splicing</keyword>
<keyword id="KW-0067">ATP-binding</keyword>
<keyword id="KW-1003">Cell membrane</keyword>
<keyword id="KW-0225">Disease variant</keyword>
<keyword id="KW-0472">Membrane</keyword>
<keyword id="KW-0496">Mitochondrion</keyword>
<keyword id="KW-1000">Mitochondrion outer membrane</keyword>
<keyword id="KW-0547">Nucleotide-binding</keyword>
<keyword id="KW-0576">Peroxisome</keyword>
<keyword id="KW-0597">Phosphoprotein</keyword>
<keyword id="KW-0628">Postsynaptic cell membrane</keyword>
<keyword id="KW-1267">Proteomics identification</keyword>
<keyword id="KW-1185">Reference proteome</keyword>
<keyword id="KW-0770">Synapse</keyword>
<keyword id="KW-1278">Translocase</keyword>
<keyword id="KW-0812">Transmembrane</keyword>
<keyword id="KW-1133">Transmembrane helix</keyword>
<feature type="chain" id="PRO_0000084791" description="Outer mitochondrial transmembrane helix translocase">
    <location>
        <begin position="1"/>
        <end position="361"/>
    </location>
</feature>
<feature type="topological domain" description="Mitochondrial intermembrane" evidence="12">
    <location>
        <begin position="1"/>
        <end position="15"/>
    </location>
</feature>
<feature type="transmembrane region" description="Helical" evidence="3">
    <location>
        <begin position="16"/>
        <end position="32"/>
    </location>
</feature>
<feature type="topological domain" description="Cytoplasmic" evidence="12">
    <location>
        <begin position="33"/>
        <end position="361"/>
    </location>
</feature>
<feature type="binding site" evidence="3">
    <location>
        <begin position="133"/>
        <end position="140"/>
    </location>
    <ligand>
        <name>ATP</name>
        <dbReference type="ChEBI" id="CHEBI:30616"/>
    </ligand>
</feature>
<feature type="modified residue" description="Phosphoserine" evidence="2">
    <location>
        <position position="322"/>
    </location>
</feature>
<feature type="splice variant" id="VSP_037304" description="In isoform 2." evidence="9">
    <original>VDRHVDLLEVAQETDGFSGSDLKEMCRDAALLCVREYVNSTSEESHDEDEIRPVQQQDLHRAIEKMKKSKDAAFQNVLTHVCLD</original>
    <variation>LRKLKPREVL</variation>
    <location>
        <begin position="278"/>
        <end position="361"/>
    </location>
</feature>
<feature type="sequence variant" id="VAR_080830" description="In HKPX4; uncertain significance; likely affects splicing due to removal of the splice donor site of intron 2; dbSNP:rs1554884979." evidence="8">
    <original>Q</original>
    <variation>H</variation>
    <location>
        <position position="54"/>
    </location>
</feature>
<feature type="sequence variant" id="VAR_035903" description="In a colorectal cancer sample; somatic mutation." evidence="4">
    <original>V</original>
    <variation>I</variation>
    <location>
        <position position="107"/>
    </location>
</feature>
<feature type="sequence variant" id="VAR_080831" description="In HKPX4; severely decreased ATAD1 mRNA expression in lymphoblastoid cells derived from the patient compared to an unaffected control." evidence="6">
    <location>
        <begin position="276"/>
        <end position="361"/>
    </location>
</feature>
<feature type="sequence conflict" description="In Ref. 1; AAL57218." evidence="12" ref="1">
    <original>S</original>
    <variation>R</variation>
    <location>
        <position position="160"/>
    </location>
</feature>
<feature type="helix" evidence="15">
    <location>
        <begin position="48"/>
        <end position="52"/>
    </location>
</feature>
<feature type="strand" evidence="15">
    <location>
        <begin position="53"/>
        <end position="56"/>
    </location>
</feature>
<feature type="helix" evidence="15">
    <location>
        <begin position="57"/>
        <end position="60"/>
    </location>
</feature>
<feature type="helix" evidence="15">
    <location>
        <begin position="71"/>
        <end position="77"/>
    </location>
</feature>
<feature type="helix" evidence="15">
    <location>
        <begin position="83"/>
        <end position="85"/>
    </location>
</feature>
<feature type="helix" evidence="15">
    <location>
        <begin position="90"/>
        <end position="92"/>
    </location>
</feature>
<feature type="helix" evidence="15">
    <location>
        <begin position="98"/>
        <end position="106"/>
    </location>
</feature>
<feature type="helix" evidence="15">
    <location>
        <begin position="108"/>
        <end position="111"/>
    </location>
</feature>
<feature type="helix" evidence="15">
    <location>
        <begin position="114"/>
        <end position="117"/>
    </location>
</feature>
<feature type="strand" evidence="15">
    <location>
        <begin position="129"/>
        <end position="138"/>
    </location>
</feature>
<feature type="helix" evidence="15">
    <location>
        <begin position="139"/>
        <end position="148"/>
    </location>
</feature>
<feature type="strand" evidence="15">
    <location>
        <begin position="152"/>
        <end position="156"/>
    </location>
</feature>
<feature type="turn" evidence="15">
    <location>
        <begin position="159"/>
        <end position="162"/>
    </location>
</feature>
<feature type="helix" evidence="15">
    <location>
        <begin position="170"/>
        <end position="183"/>
    </location>
</feature>
<feature type="strand" evidence="15">
    <location>
        <begin position="184"/>
        <end position="190"/>
    </location>
</feature>
<feature type="turn" evidence="15">
    <location>
        <begin position="192"/>
        <end position="197"/>
    </location>
</feature>
<feature type="strand" evidence="15">
    <location>
        <begin position="203"/>
        <end position="205"/>
    </location>
</feature>
<feature type="helix" evidence="15">
    <location>
        <begin position="207"/>
        <end position="220"/>
    </location>
</feature>
<feature type="strand" evidence="15">
    <location>
        <begin position="221"/>
        <end position="224"/>
    </location>
</feature>
<feature type="strand" evidence="15">
    <location>
        <begin position="226"/>
        <end position="228"/>
    </location>
</feature>
<feature type="strand" evidence="15">
    <location>
        <begin position="231"/>
        <end position="236"/>
    </location>
</feature>
<feature type="helix" evidence="15">
    <location>
        <begin position="240"/>
        <end position="242"/>
    </location>
</feature>
<feature type="helix" evidence="15">
    <location>
        <begin position="246"/>
        <end position="250"/>
    </location>
</feature>
<feature type="strand" evidence="15">
    <location>
        <begin position="253"/>
        <end position="256"/>
    </location>
</feature>
<feature type="helix" evidence="15">
    <location>
        <begin position="262"/>
        <end position="272"/>
    </location>
</feature>
<feature type="helix" evidence="15">
    <location>
        <begin position="284"/>
        <end position="291"/>
    </location>
</feature>
<feature type="helix" evidence="15">
    <location>
        <begin position="298"/>
        <end position="315"/>
    </location>
</feature>
<feature type="helix" evidence="15">
    <location>
        <begin position="334"/>
        <end position="346"/>
    </location>
</feature>
<feature type="helix" evidence="15">
    <location>
        <begin position="347"/>
        <end position="349"/>
    </location>
</feature>
<proteinExistence type="evidence at protein level"/>